<organism>
    <name type="scientific">Pseudocercospora fijiensis (strain CIRAD86)</name>
    <name type="common">Black leaf streak disease fungus</name>
    <name type="synonym">Mycosphaerella fijiensis</name>
    <dbReference type="NCBI Taxonomy" id="383855"/>
    <lineage>
        <taxon>Eukaryota</taxon>
        <taxon>Fungi</taxon>
        <taxon>Dikarya</taxon>
        <taxon>Ascomycota</taxon>
        <taxon>Pezizomycotina</taxon>
        <taxon>Dothideomycetes</taxon>
        <taxon>Dothideomycetidae</taxon>
        <taxon>Mycosphaerellales</taxon>
        <taxon>Mycosphaerellaceae</taxon>
        <taxon>Pseudocercospora</taxon>
    </lineage>
</organism>
<evidence type="ECO:0000255" key="1">
    <source>
        <dbReference type="PROSITE-ProRule" id="PRU00227"/>
    </source>
</evidence>
<evidence type="ECO:0000256" key="2">
    <source>
        <dbReference type="SAM" id="MobiDB-lite"/>
    </source>
</evidence>
<evidence type="ECO:0000269" key="3">
    <source>
    </source>
</evidence>
<evidence type="ECO:0000269" key="4">
    <source>
    </source>
</evidence>
<evidence type="ECO:0000303" key="5">
    <source>
    </source>
</evidence>
<keyword id="KW-0238">DNA-binding</keyword>
<keyword id="KW-0479">Metal-binding</keyword>
<keyword id="KW-0539">Nucleus</keyword>
<keyword id="KW-1185">Reference proteome</keyword>
<keyword id="KW-0804">Transcription</keyword>
<keyword id="KW-0805">Transcription regulation</keyword>
<reference key="1">
    <citation type="journal article" date="2012" name="PLoS Pathog.">
        <title>Diverse lifestyles and strategies of plant pathogenesis encoded in the genomes of eighteen Dothideomycetes fungi.</title>
        <authorList>
            <person name="Ohm R.A."/>
            <person name="Feau N."/>
            <person name="Henrissat B."/>
            <person name="Schoch C.L."/>
            <person name="Horwitz B.A."/>
            <person name="Barry K.W."/>
            <person name="Condon B.J."/>
            <person name="Copeland A.C."/>
            <person name="Dhillon B."/>
            <person name="Glaser F."/>
            <person name="Hesse C.N."/>
            <person name="Kosti I."/>
            <person name="LaButti K."/>
            <person name="Lindquist E.A."/>
            <person name="Lucas S."/>
            <person name="Salamov A.A."/>
            <person name="Bradshaw R.E."/>
            <person name="Ciuffetti L."/>
            <person name="Hamelin R.C."/>
            <person name="Kema G.H.J."/>
            <person name="Lawrence C."/>
            <person name="Scott J.A."/>
            <person name="Spatafora J.W."/>
            <person name="Turgeon B.G."/>
            <person name="de Wit P.J.G.M."/>
            <person name="Zhong S."/>
            <person name="Goodwin S.B."/>
            <person name="Grigoriev I.V."/>
        </authorList>
    </citation>
    <scope>NUCLEOTIDE SEQUENCE [LARGE SCALE GENOMIC DNA]</scope>
    <source>
        <strain>CIRAD86</strain>
    </source>
</reference>
<reference key="2">
    <citation type="journal article" date="2016" name="PLoS ONE">
        <title>Bioinformatics prediction of polyketide synthase gene clusters from Mycosphaerella fijiensis.</title>
        <authorList>
            <person name="Noar R.D."/>
            <person name="Daub M.E."/>
        </authorList>
    </citation>
    <scope>IDENTIFICATION</scope>
    <scope>FUNCTION</scope>
</reference>
<reference key="3">
    <citation type="journal article" date="2019" name="PLoS ONE">
        <title>A novel polyketide synthase gene cluster in the plant pathogenic fungus Pseudocercospora fijiensis.</title>
        <authorList>
            <person name="Noar R.D."/>
            <person name="Thomas E."/>
            <person name="Daub M.E."/>
        </authorList>
    </citation>
    <scope>FUNCTION</scope>
</reference>
<accession>M3APK0</accession>
<gene>
    <name type="ORF">MYCFIDRAFT_198930</name>
</gene>
<dbReference type="EMBL" id="KB446562">
    <property type="protein sequence ID" value="EME79053.1"/>
    <property type="molecule type" value="Genomic_DNA"/>
</dbReference>
<dbReference type="RefSeq" id="XP_007929880.1">
    <property type="nucleotide sequence ID" value="XM_007931689.1"/>
</dbReference>
<dbReference type="SMR" id="M3APK0"/>
<dbReference type="STRING" id="383855.M3APK0"/>
<dbReference type="GeneID" id="19335767"/>
<dbReference type="KEGG" id="pfj:MYCFIDRAFT_198930"/>
<dbReference type="VEuPathDB" id="FungiDB:MYCFIDRAFT_198930"/>
<dbReference type="eggNOG" id="ENOG502SUW5">
    <property type="taxonomic scope" value="Eukaryota"/>
</dbReference>
<dbReference type="HOGENOM" id="CLU_031656_1_0_1"/>
<dbReference type="OrthoDB" id="2328572at2759"/>
<dbReference type="Proteomes" id="UP000016932">
    <property type="component" value="Unassembled WGS sequence"/>
</dbReference>
<dbReference type="GO" id="GO:0005634">
    <property type="term" value="C:nucleus"/>
    <property type="evidence" value="ECO:0007669"/>
    <property type="project" value="UniProtKB-SubCell"/>
</dbReference>
<dbReference type="GO" id="GO:0003677">
    <property type="term" value="F:DNA binding"/>
    <property type="evidence" value="ECO:0007669"/>
    <property type="project" value="UniProtKB-KW"/>
</dbReference>
<dbReference type="GO" id="GO:0000981">
    <property type="term" value="F:DNA-binding transcription factor activity, RNA polymerase II-specific"/>
    <property type="evidence" value="ECO:0007669"/>
    <property type="project" value="InterPro"/>
</dbReference>
<dbReference type="GO" id="GO:0008270">
    <property type="term" value="F:zinc ion binding"/>
    <property type="evidence" value="ECO:0007669"/>
    <property type="project" value="InterPro"/>
</dbReference>
<dbReference type="GO" id="GO:0045122">
    <property type="term" value="P:aflatoxin biosynthetic process"/>
    <property type="evidence" value="ECO:0007669"/>
    <property type="project" value="InterPro"/>
</dbReference>
<dbReference type="CDD" id="cd00067">
    <property type="entry name" value="GAL4"/>
    <property type="match status" value="1"/>
</dbReference>
<dbReference type="Gene3D" id="4.10.240.10">
    <property type="entry name" value="Zn(2)-C6 fungal-type DNA-binding domain"/>
    <property type="match status" value="1"/>
</dbReference>
<dbReference type="InterPro" id="IPR013700">
    <property type="entry name" value="AflR"/>
</dbReference>
<dbReference type="InterPro" id="IPR050675">
    <property type="entry name" value="OAF3"/>
</dbReference>
<dbReference type="InterPro" id="IPR036864">
    <property type="entry name" value="Zn2-C6_fun-type_DNA-bd_sf"/>
</dbReference>
<dbReference type="InterPro" id="IPR001138">
    <property type="entry name" value="Zn2Cys6_DnaBD"/>
</dbReference>
<dbReference type="PANTHER" id="PTHR31069:SF31">
    <property type="entry name" value="MONODICTYPHENONE CLUSTER TRANSCRIPTION FACTOR-RELATED"/>
    <property type="match status" value="1"/>
</dbReference>
<dbReference type="PANTHER" id="PTHR31069">
    <property type="entry name" value="OLEATE-ACTIVATED TRANSCRIPTION FACTOR 1-RELATED"/>
    <property type="match status" value="1"/>
</dbReference>
<dbReference type="Pfam" id="PF08493">
    <property type="entry name" value="AflR"/>
    <property type="match status" value="1"/>
</dbReference>
<dbReference type="Pfam" id="PF00172">
    <property type="entry name" value="Zn_clus"/>
    <property type="match status" value="1"/>
</dbReference>
<dbReference type="PRINTS" id="PR00755">
    <property type="entry name" value="AFLATOXINBRP"/>
</dbReference>
<dbReference type="SMART" id="SM00066">
    <property type="entry name" value="GAL4"/>
    <property type="match status" value="1"/>
</dbReference>
<dbReference type="SUPFAM" id="SSF57701">
    <property type="entry name" value="Zn2/Cys6 DNA-binding domain"/>
    <property type="match status" value="1"/>
</dbReference>
<dbReference type="PROSITE" id="PS00463">
    <property type="entry name" value="ZN2_CY6_FUNGAL_1"/>
    <property type="match status" value="1"/>
</dbReference>
<dbReference type="PROSITE" id="PS50048">
    <property type="entry name" value="ZN2_CY6_FUNGAL_2"/>
    <property type="match status" value="1"/>
</dbReference>
<proteinExistence type="inferred from homology"/>
<protein>
    <recommendedName>
        <fullName evidence="5">Transcription factor MYCFIDRAFT_198930</fullName>
    </recommendedName>
    <alternativeName>
        <fullName evidence="5">PKS8-1 gene cluster protein MYCFIDRAFT_198930</fullName>
    </alternativeName>
</protein>
<comment type="function">
    <text evidence="3 4">Transcription factor that positively regulates the expression of the gene cluster that mediates the biosynthesis of an emodin derivative that may be involved in black Sigatoka disease of banana.</text>
</comment>
<comment type="subcellular location">
    <subcellularLocation>
        <location evidence="1">Nucleus</location>
    </subcellularLocation>
</comment>
<sequence>MSTTPMAAPPGADLKPVTSSRGRSSTSDEQKLRSSCESCAQSKLKCSGDKPACARCAKRGLACKYVIAKRGGRKPKGYTSTNDNNPSKRREDSHSPAASQWSSTGHLEQSYPYCDPTISGSASPALIAMSDFYNPMDQNLPDAPTSHSDISMDFDFNDCFSLGFPSSNELSDFCNVGSTDMFSPSLDSSSSSSTGPERQLLCDGFSLTDDAMSDLFPLSPPEPQQQISCTPTDKNPHSYQEACLNGSCSCLVEALSLMKQLVSSPARNGAASPPNIQTIIDRNEATIESVRRMLECSCSQDDGYLLSVMSLIIFRVLGWYATVARQTACDVDSQPSRSPQSSISSAGSGYCLEGADSARMAAQLVLSEIHHVRRIVHQLSLKLKAQGEKERSRPETRMEGLEAMDNEMTLPLSATMYDQLDVDLKKRLRALSWEMIDRLRRY</sequence>
<feature type="chain" id="PRO_0000451122" description="Transcription factor MYCFIDRAFT_198930">
    <location>
        <begin position="1"/>
        <end position="442"/>
    </location>
</feature>
<feature type="DNA-binding region" description="Zn(2)-C6 fungal-type" evidence="1">
    <location>
        <begin position="36"/>
        <end position="63"/>
    </location>
</feature>
<feature type="region of interest" description="Disordered" evidence="2">
    <location>
        <begin position="1"/>
        <end position="34"/>
    </location>
</feature>
<feature type="region of interest" description="Disordered" evidence="2">
    <location>
        <begin position="74"/>
        <end position="107"/>
    </location>
</feature>
<feature type="compositionally biased region" description="Polar residues" evidence="2">
    <location>
        <begin position="96"/>
        <end position="107"/>
    </location>
</feature>
<name>PK81E_PSEFD</name>